<sequence>MKSSVEQLNPTRVRINVEVPFTELEPDFQRAYKELARHVQLPGFRPGKVPARLLEARFGRETLLDQVVNEAMPSRYGQALAESEVQPIGQPEIEVIRKEYGQDLAFTVEVEVRPKIALPDFSTLKVVVDPVEVSTDDVEAELRSLRARFGTLIGVDRPVALGDFVSIDLSATINGEKVPNADAEGLSHEVGYGRLIAGLDDALVGLSAGESRVFTTQLATSKHAGQDAEVIVTVKSVKERELPEPDDEFAQLVSEFDTMAELRANLGDQVRKAKYAQQAEKIRDAAVDALLERVDVPLPEGIVQAQFNNALHDALSGLGHDEAKFAEVLAERGSSREEFEAEARSAAERDVTRQLLLDVVADDQKIQVGQDDLNERLLATSQQYGVDAQQLFGFLRENNRLSSLVTDARRRLAVAAVVEAATFTDSDGNTIDTSEFFGKHAQSDKADQKTEEADPNSDAIDEEVDEAAE</sequence>
<protein>
    <recommendedName>
        <fullName evidence="1">Trigger factor</fullName>
        <shortName evidence="1">TF</shortName>
        <ecNumber evidence="1">5.2.1.8</ecNumber>
    </recommendedName>
    <alternativeName>
        <fullName evidence="1">PPIase</fullName>
    </alternativeName>
</protein>
<dbReference type="EC" id="5.2.1.8" evidence="1"/>
<dbReference type="EMBL" id="AL583922">
    <property type="protein sequence ID" value="CAC30431.1"/>
    <property type="molecule type" value="Genomic_DNA"/>
</dbReference>
<dbReference type="PIR" id="B87094">
    <property type="entry name" value="B87094"/>
</dbReference>
<dbReference type="RefSeq" id="NP_302042.1">
    <property type="nucleotide sequence ID" value="NC_002677.1"/>
</dbReference>
<dbReference type="RefSeq" id="WP_010908363.1">
    <property type="nucleotide sequence ID" value="NC_002677.1"/>
</dbReference>
<dbReference type="SMR" id="Q9CBY2"/>
<dbReference type="STRING" id="272631.gene:17575319"/>
<dbReference type="KEGG" id="mle:ML1481"/>
<dbReference type="PATRIC" id="fig|272631.5.peg.2773"/>
<dbReference type="Leproma" id="ML1481"/>
<dbReference type="eggNOG" id="COG0544">
    <property type="taxonomic scope" value="Bacteria"/>
</dbReference>
<dbReference type="HOGENOM" id="CLU_033058_3_0_11"/>
<dbReference type="OrthoDB" id="9767721at2"/>
<dbReference type="Proteomes" id="UP000000806">
    <property type="component" value="Chromosome"/>
</dbReference>
<dbReference type="GO" id="GO:0005737">
    <property type="term" value="C:cytoplasm"/>
    <property type="evidence" value="ECO:0007669"/>
    <property type="project" value="UniProtKB-SubCell"/>
</dbReference>
<dbReference type="GO" id="GO:0003755">
    <property type="term" value="F:peptidyl-prolyl cis-trans isomerase activity"/>
    <property type="evidence" value="ECO:0007669"/>
    <property type="project" value="UniProtKB-UniRule"/>
</dbReference>
<dbReference type="GO" id="GO:0044183">
    <property type="term" value="F:protein folding chaperone"/>
    <property type="evidence" value="ECO:0007669"/>
    <property type="project" value="TreeGrafter"/>
</dbReference>
<dbReference type="GO" id="GO:0043022">
    <property type="term" value="F:ribosome binding"/>
    <property type="evidence" value="ECO:0007669"/>
    <property type="project" value="TreeGrafter"/>
</dbReference>
<dbReference type="GO" id="GO:0051083">
    <property type="term" value="P:'de novo' cotranslational protein folding"/>
    <property type="evidence" value="ECO:0007669"/>
    <property type="project" value="TreeGrafter"/>
</dbReference>
<dbReference type="GO" id="GO:0051301">
    <property type="term" value="P:cell division"/>
    <property type="evidence" value="ECO:0007669"/>
    <property type="project" value="UniProtKB-KW"/>
</dbReference>
<dbReference type="GO" id="GO:0061077">
    <property type="term" value="P:chaperone-mediated protein folding"/>
    <property type="evidence" value="ECO:0007669"/>
    <property type="project" value="TreeGrafter"/>
</dbReference>
<dbReference type="GO" id="GO:0015031">
    <property type="term" value="P:protein transport"/>
    <property type="evidence" value="ECO:0007669"/>
    <property type="project" value="UniProtKB-UniRule"/>
</dbReference>
<dbReference type="GO" id="GO:0043335">
    <property type="term" value="P:protein unfolding"/>
    <property type="evidence" value="ECO:0007669"/>
    <property type="project" value="TreeGrafter"/>
</dbReference>
<dbReference type="Gene3D" id="3.10.50.40">
    <property type="match status" value="1"/>
</dbReference>
<dbReference type="Gene3D" id="3.30.70.1050">
    <property type="entry name" value="Trigger factor ribosome-binding domain"/>
    <property type="match status" value="1"/>
</dbReference>
<dbReference type="Gene3D" id="1.10.3120.10">
    <property type="entry name" value="Trigger factor, C-terminal domain"/>
    <property type="match status" value="1"/>
</dbReference>
<dbReference type="HAMAP" id="MF_00303">
    <property type="entry name" value="Trigger_factor_Tig"/>
    <property type="match status" value="1"/>
</dbReference>
<dbReference type="InterPro" id="IPR046357">
    <property type="entry name" value="PPIase_dom_sf"/>
</dbReference>
<dbReference type="InterPro" id="IPR001179">
    <property type="entry name" value="PPIase_FKBP_dom"/>
</dbReference>
<dbReference type="InterPro" id="IPR005215">
    <property type="entry name" value="Trig_fac"/>
</dbReference>
<dbReference type="InterPro" id="IPR008880">
    <property type="entry name" value="Trigger_fac_C"/>
</dbReference>
<dbReference type="InterPro" id="IPR037041">
    <property type="entry name" value="Trigger_fac_C_sf"/>
</dbReference>
<dbReference type="InterPro" id="IPR008881">
    <property type="entry name" value="Trigger_fac_ribosome-bd_bac"/>
</dbReference>
<dbReference type="InterPro" id="IPR036611">
    <property type="entry name" value="Trigger_fac_ribosome-bd_sf"/>
</dbReference>
<dbReference type="InterPro" id="IPR027304">
    <property type="entry name" value="Trigger_fact/SurA_dom_sf"/>
</dbReference>
<dbReference type="NCBIfam" id="TIGR00115">
    <property type="entry name" value="tig"/>
    <property type="match status" value="1"/>
</dbReference>
<dbReference type="PANTHER" id="PTHR30560">
    <property type="entry name" value="TRIGGER FACTOR CHAPERONE AND PEPTIDYL-PROLYL CIS/TRANS ISOMERASE"/>
    <property type="match status" value="1"/>
</dbReference>
<dbReference type="PANTHER" id="PTHR30560:SF3">
    <property type="entry name" value="TRIGGER FACTOR-LIKE PROTEIN TIG, CHLOROPLASTIC"/>
    <property type="match status" value="1"/>
</dbReference>
<dbReference type="Pfam" id="PF00254">
    <property type="entry name" value="FKBP_C"/>
    <property type="match status" value="1"/>
</dbReference>
<dbReference type="Pfam" id="PF05698">
    <property type="entry name" value="Trigger_C"/>
    <property type="match status" value="1"/>
</dbReference>
<dbReference type="Pfam" id="PF05697">
    <property type="entry name" value="Trigger_N"/>
    <property type="match status" value="1"/>
</dbReference>
<dbReference type="PIRSF" id="PIRSF003095">
    <property type="entry name" value="Trigger_factor"/>
    <property type="match status" value="1"/>
</dbReference>
<dbReference type="SUPFAM" id="SSF54534">
    <property type="entry name" value="FKBP-like"/>
    <property type="match status" value="1"/>
</dbReference>
<dbReference type="SUPFAM" id="SSF109998">
    <property type="entry name" value="Triger factor/SurA peptide-binding domain-like"/>
    <property type="match status" value="1"/>
</dbReference>
<dbReference type="SUPFAM" id="SSF102735">
    <property type="entry name" value="Trigger factor ribosome-binding domain"/>
    <property type="match status" value="1"/>
</dbReference>
<dbReference type="PROSITE" id="PS50059">
    <property type="entry name" value="FKBP_PPIASE"/>
    <property type="match status" value="1"/>
</dbReference>
<feature type="chain" id="PRO_0000179390" description="Trigger factor">
    <location>
        <begin position="1"/>
        <end position="469"/>
    </location>
</feature>
<feature type="domain" description="PPIase FKBP-type" evidence="1">
    <location>
        <begin position="162"/>
        <end position="243"/>
    </location>
</feature>
<feature type="region of interest" description="Disordered" evidence="2">
    <location>
        <begin position="429"/>
        <end position="469"/>
    </location>
</feature>
<feature type="compositionally biased region" description="Basic and acidic residues" evidence="2">
    <location>
        <begin position="437"/>
        <end position="452"/>
    </location>
</feature>
<feature type="compositionally biased region" description="Acidic residues" evidence="2">
    <location>
        <begin position="453"/>
        <end position="469"/>
    </location>
</feature>
<keyword id="KW-0131">Cell cycle</keyword>
<keyword id="KW-0132">Cell division</keyword>
<keyword id="KW-0143">Chaperone</keyword>
<keyword id="KW-0963">Cytoplasm</keyword>
<keyword id="KW-0413">Isomerase</keyword>
<keyword id="KW-1185">Reference proteome</keyword>
<keyword id="KW-0697">Rotamase</keyword>
<organism>
    <name type="scientific">Mycobacterium leprae (strain TN)</name>
    <dbReference type="NCBI Taxonomy" id="272631"/>
    <lineage>
        <taxon>Bacteria</taxon>
        <taxon>Bacillati</taxon>
        <taxon>Actinomycetota</taxon>
        <taxon>Actinomycetes</taxon>
        <taxon>Mycobacteriales</taxon>
        <taxon>Mycobacteriaceae</taxon>
        <taxon>Mycobacterium</taxon>
    </lineage>
</organism>
<comment type="function">
    <text evidence="1">Involved in protein export. Acts as a chaperone by maintaining the newly synthesized protein in an open conformation. Functions as a peptidyl-prolyl cis-trans isomerase.</text>
</comment>
<comment type="catalytic activity">
    <reaction evidence="1">
        <text>[protein]-peptidylproline (omega=180) = [protein]-peptidylproline (omega=0)</text>
        <dbReference type="Rhea" id="RHEA:16237"/>
        <dbReference type="Rhea" id="RHEA-COMP:10747"/>
        <dbReference type="Rhea" id="RHEA-COMP:10748"/>
        <dbReference type="ChEBI" id="CHEBI:83833"/>
        <dbReference type="ChEBI" id="CHEBI:83834"/>
        <dbReference type="EC" id="5.2.1.8"/>
    </reaction>
</comment>
<comment type="subcellular location">
    <subcellularLocation>
        <location>Cytoplasm</location>
    </subcellularLocation>
    <text evidence="1">About half TF is bound to the ribosome near the polypeptide exit tunnel while the other half is free in the cytoplasm.</text>
</comment>
<comment type="domain">
    <text evidence="1">Consists of 3 domains; the N-terminus binds the ribosome, the middle domain has PPIase activity, while the C-terminus has intrinsic chaperone activity on its own.</text>
</comment>
<comment type="similarity">
    <text evidence="1">Belongs to the FKBP-type PPIase family. Tig subfamily.</text>
</comment>
<evidence type="ECO:0000255" key="1">
    <source>
        <dbReference type="HAMAP-Rule" id="MF_00303"/>
    </source>
</evidence>
<evidence type="ECO:0000256" key="2">
    <source>
        <dbReference type="SAM" id="MobiDB-lite"/>
    </source>
</evidence>
<proteinExistence type="inferred from homology"/>
<accession>Q9CBY2</accession>
<name>TIG_MYCLE</name>
<reference key="1">
    <citation type="journal article" date="2001" name="Nature">
        <title>Massive gene decay in the leprosy bacillus.</title>
        <authorList>
            <person name="Cole S.T."/>
            <person name="Eiglmeier K."/>
            <person name="Parkhill J."/>
            <person name="James K.D."/>
            <person name="Thomson N.R."/>
            <person name="Wheeler P.R."/>
            <person name="Honore N."/>
            <person name="Garnier T."/>
            <person name="Churcher C.M."/>
            <person name="Harris D.E."/>
            <person name="Mungall K.L."/>
            <person name="Basham D."/>
            <person name="Brown D."/>
            <person name="Chillingworth T."/>
            <person name="Connor R."/>
            <person name="Davies R.M."/>
            <person name="Devlin K."/>
            <person name="Duthoy S."/>
            <person name="Feltwell T."/>
            <person name="Fraser A."/>
            <person name="Hamlin N."/>
            <person name="Holroyd S."/>
            <person name="Hornsby T."/>
            <person name="Jagels K."/>
            <person name="Lacroix C."/>
            <person name="Maclean J."/>
            <person name="Moule S."/>
            <person name="Murphy L.D."/>
            <person name="Oliver K."/>
            <person name="Quail M.A."/>
            <person name="Rajandream M.A."/>
            <person name="Rutherford K.M."/>
            <person name="Rutter S."/>
            <person name="Seeger K."/>
            <person name="Simon S."/>
            <person name="Simmonds M."/>
            <person name="Skelton J."/>
            <person name="Squares R."/>
            <person name="Squares S."/>
            <person name="Stevens K."/>
            <person name="Taylor K."/>
            <person name="Whitehead S."/>
            <person name="Woodward J.R."/>
            <person name="Barrell B.G."/>
        </authorList>
    </citation>
    <scope>NUCLEOTIDE SEQUENCE [LARGE SCALE GENOMIC DNA]</scope>
    <source>
        <strain>TN</strain>
    </source>
</reference>
<gene>
    <name evidence="1" type="primary">tig</name>
    <name type="ordered locus">ML1481</name>
</gene>